<proteinExistence type="evidence at protein level"/>
<feature type="chain" id="PRO_0000212207" description="2,3-bisphosphoglycerate-independent phosphoglycerate mutase">
    <location>
        <begin position="1"/>
        <end position="505"/>
    </location>
</feature>
<feature type="active site" description="Phosphoserine intermediate" evidence="1">
    <location>
        <position position="62"/>
    </location>
</feature>
<feature type="binding site" evidence="1">
    <location>
        <position position="12"/>
    </location>
    <ligand>
        <name>Mn(2+)</name>
        <dbReference type="ChEBI" id="CHEBI:29035"/>
        <label>2</label>
    </ligand>
</feature>
<feature type="binding site" evidence="1">
    <location>
        <position position="62"/>
    </location>
    <ligand>
        <name>Mn(2+)</name>
        <dbReference type="ChEBI" id="CHEBI:29035"/>
        <label>2</label>
    </ligand>
</feature>
<feature type="binding site" evidence="1">
    <location>
        <position position="123"/>
    </location>
    <ligand>
        <name>substrate</name>
    </ligand>
</feature>
<feature type="binding site" evidence="1">
    <location>
        <begin position="153"/>
        <end position="154"/>
    </location>
    <ligand>
        <name>substrate</name>
    </ligand>
</feature>
<feature type="binding site" evidence="1">
    <location>
        <position position="185"/>
    </location>
    <ligand>
        <name>substrate</name>
    </ligand>
</feature>
<feature type="binding site" evidence="1">
    <location>
        <position position="191"/>
    </location>
    <ligand>
        <name>substrate</name>
    </ligand>
</feature>
<feature type="binding site" evidence="1">
    <location>
        <begin position="257"/>
        <end position="260"/>
    </location>
    <ligand>
        <name>substrate</name>
    </ligand>
</feature>
<feature type="binding site" evidence="1">
    <location>
        <position position="330"/>
    </location>
    <ligand>
        <name>substrate</name>
    </ligand>
</feature>
<feature type="binding site" evidence="1">
    <location>
        <position position="397"/>
    </location>
    <ligand>
        <name>Mn(2+)</name>
        <dbReference type="ChEBI" id="CHEBI:29035"/>
        <label>1</label>
    </ligand>
</feature>
<feature type="binding site" evidence="1">
    <location>
        <position position="401"/>
    </location>
    <ligand>
        <name>Mn(2+)</name>
        <dbReference type="ChEBI" id="CHEBI:29035"/>
        <label>1</label>
    </ligand>
</feature>
<feature type="binding site" evidence="1">
    <location>
        <position position="438"/>
    </location>
    <ligand>
        <name>Mn(2+)</name>
        <dbReference type="ChEBI" id="CHEBI:29035"/>
        <label>2</label>
    </ligand>
</feature>
<feature type="binding site" evidence="1">
    <location>
        <position position="439"/>
    </location>
    <ligand>
        <name>Mn(2+)</name>
        <dbReference type="ChEBI" id="CHEBI:29035"/>
        <label>2</label>
    </ligand>
</feature>
<feature type="binding site" evidence="1">
    <location>
        <position position="456"/>
    </location>
    <ligand>
        <name>Mn(2+)</name>
        <dbReference type="ChEBI" id="CHEBI:29035"/>
        <label>1</label>
    </ligand>
</feature>
<feature type="strand" evidence="2">
    <location>
        <begin position="6"/>
        <end position="13"/>
    </location>
</feature>
<feature type="helix" evidence="2">
    <location>
        <begin position="24"/>
        <end position="27"/>
    </location>
</feature>
<feature type="helix" evidence="2">
    <location>
        <begin position="31"/>
        <end position="39"/>
    </location>
</feature>
<feature type="strand" evidence="2">
    <location>
        <begin position="42"/>
        <end position="46"/>
    </location>
</feature>
<feature type="helix" evidence="2">
    <location>
        <begin position="49"/>
        <end position="52"/>
    </location>
</feature>
<feature type="helix" evidence="2">
    <location>
        <begin position="62"/>
        <end position="71"/>
    </location>
</feature>
<feature type="helix" evidence="2">
    <location>
        <begin position="78"/>
        <end position="88"/>
    </location>
</feature>
<feature type="helix" evidence="2">
    <location>
        <begin position="90"/>
        <end position="93"/>
    </location>
</feature>
<feature type="helix" evidence="2">
    <location>
        <begin position="95"/>
        <end position="106"/>
    </location>
</feature>
<feature type="strand" evidence="2">
    <location>
        <begin position="112"/>
        <end position="116"/>
    </location>
</feature>
<feature type="helix" evidence="2">
    <location>
        <begin position="126"/>
        <end position="138"/>
    </location>
</feature>
<feature type="strand" evidence="2">
    <location>
        <begin position="145"/>
        <end position="150"/>
    </location>
</feature>
<feature type="strand" evidence="2">
    <location>
        <begin position="152"/>
        <end position="155"/>
    </location>
</feature>
<feature type="helix" evidence="2">
    <location>
        <begin position="160"/>
        <end position="174"/>
    </location>
</feature>
<feature type="strand" evidence="2">
    <location>
        <begin position="178"/>
        <end position="184"/>
    </location>
</feature>
<feature type="helix" evidence="2">
    <location>
        <begin position="185"/>
        <end position="188"/>
    </location>
</feature>
<feature type="helix" evidence="2">
    <location>
        <begin position="195"/>
        <end position="204"/>
    </location>
</feature>
<feature type="strand" evidence="2">
    <location>
        <begin position="212"/>
        <end position="215"/>
    </location>
</feature>
<feature type="helix" evidence="2">
    <location>
        <begin position="216"/>
        <end position="225"/>
    </location>
</feature>
<feature type="helix" evidence="2">
    <location>
        <begin position="230"/>
        <end position="232"/>
    </location>
</feature>
<feature type="strand" evidence="2">
    <location>
        <begin position="236"/>
        <end position="238"/>
    </location>
</feature>
<feature type="turn" evidence="2">
    <location>
        <begin position="239"/>
        <end position="241"/>
    </location>
</feature>
<feature type="helix" evidence="2">
    <location>
        <begin position="258"/>
        <end position="269"/>
    </location>
</feature>
<feature type="strand" evidence="2">
    <location>
        <begin position="287"/>
        <end position="290"/>
    </location>
</feature>
<feature type="strand" evidence="2">
    <location>
        <begin position="293"/>
        <end position="296"/>
    </location>
</feature>
<feature type="strand" evidence="2">
    <location>
        <begin position="299"/>
        <end position="301"/>
    </location>
</feature>
<feature type="helix" evidence="2">
    <location>
        <begin position="311"/>
        <end position="317"/>
    </location>
</feature>
<feature type="strand" evidence="2">
    <location>
        <begin position="322"/>
        <end position="327"/>
    </location>
</feature>
<feature type="helix" evidence="2">
    <location>
        <begin position="328"/>
        <end position="330"/>
    </location>
</feature>
<feature type="helix" evidence="2">
    <location>
        <begin position="331"/>
        <end position="334"/>
    </location>
</feature>
<feature type="turn" evidence="2">
    <location>
        <begin position="335"/>
        <end position="340"/>
    </location>
</feature>
<feature type="strand" evidence="2">
    <location>
        <begin position="349"/>
        <end position="354"/>
    </location>
</feature>
<feature type="helix" evidence="2">
    <location>
        <begin position="362"/>
        <end position="364"/>
    </location>
</feature>
<feature type="turn" evidence="2">
    <location>
        <begin position="366"/>
        <end position="369"/>
    </location>
</feature>
<feature type="helix" evidence="2">
    <location>
        <begin position="370"/>
        <end position="382"/>
    </location>
</feature>
<feature type="strand" evidence="2">
    <location>
        <begin position="387"/>
        <end position="393"/>
    </location>
</feature>
<feature type="helix" evidence="2">
    <location>
        <begin position="395"/>
        <end position="400"/>
    </location>
</feature>
<feature type="helix" evidence="2">
    <location>
        <begin position="405"/>
        <end position="428"/>
    </location>
</feature>
<feature type="strand" evidence="2">
    <location>
        <begin position="432"/>
        <end position="436"/>
    </location>
</feature>
<feature type="strand" evidence="2">
    <location>
        <begin position="438"/>
        <end position="441"/>
    </location>
</feature>
<feature type="strand" evidence="2">
    <location>
        <begin position="461"/>
        <end position="465"/>
    </location>
</feature>
<feature type="helix" evidence="2">
    <location>
        <begin position="478"/>
        <end position="480"/>
    </location>
</feature>
<feature type="helix" evidence="2">
    <location>
        <begin position="481"/>
        <end position="488"/>
    </location>
</feature>
<evidence type="ECO:0000255" key="1">
    <source>
        <dbReference type="HAMAP-Rule" id="MF_01038"/>
    </source>
</evidence>
<evidence type="ECO:0007829" key="2">
    <source>
        <dbReference type="PDB" id="7TL8"/>
    </source>
</evidence>
<dbReference type="EC" id="5.4.2.12" evidence="1"/>
<dbReference type="EMBL" id="CP000046">
    <property type="protein sequence ID" value="AAW36397.1"/>
    <property type="molecule type" value="Genomic_DNA"/>
</dbReference>
<dbReference type="RefSeq" id="WP_001085505.1">
    <property type="nucleotide sequence ID" value="NZ_JBGOFO010000005.1"/>
</dbReference>
<dbReference type="PDB" id="7TL8">
    <property type="method" value="X-ray"/>
    <property type="resolution" value="1.95 A"/>
    <property type="chains" value="A=1-505"/>
</dbReference>
<dbReference type="PDBsum" id="7TL8"/>
<dbReference type="SMR" id="Q5HHP2"/>
<dbReference type="KEGG" id="sac:SACOL0841"/>
<dbReference type="HOGENOM" id="CLU_026099_2_0_9"/>
<dbReference type="UniPathway" id="UPA00109">
    <property type="reaction ID" value="UER00186"/>
</dbReference>
<dbReference type="Proteomes" id="UP000000530">
    <property type="component" value="Chromosome"/>
</dbReference>
<dbReference type="GO" id="GO:0005829">
    <property type="term" value="C:cytosol"/>
    <property type="evidence" value="ECO:0007669"/>
    <property type="project" value="TreeGrafter"/>
</dbReference>
<dbReference type="GO" id="GO:0030145">
    <property type="term" value="F:manganese ion binding"/>
    <property type="evidence" value="ECO:0007669"/>
    <property type="project" value="UniProtKB-UniRule"/>
</dbReference>
<dbReference type="GO" id="GO:0004619">
    <property type="term" value="F:phosphoglycerate mutase activity"/>
    <property type="evidence" value="ECO:0007669"/>
    <property type="project" value="UniProtKB-EC"/>
</dbReference>
<dbReference type="GO" id="GO:0006007">
    <property type="term" value="P:glucose catabolic process"/>
    <property type="evidence" value="ECO:0007669"/>
    <property type="project" value="InterPro"/>
</dbReference>
<dbReference type="GO" id="GO:0006096">
    <property type="term" value="P:glycolytic process"/>
    <property type="evidence" value="ECO:0007669"/>
    <property type="project" value="UniProtKB-UniRule"/>
</dbReference>
<dbReference type="CDD" id="cd16010">
    <property type="entry name" value="iPGM"/>
    <property type="match status" value="1"/>
</dbReference>
<dbReference type="FunFam" id="3.40.1450.10:FF:000001">
    <property type="entry name" value="2,3-bisphosphoglycerate-independent phosphoglycerate mutase"/>
    <property type="match status" value="1"/>
</dbReference>
<dbReference type="FunFam" id="3.40.720.10:FF:000001">
    <property type="entry name" value="2,3-bisphosphoglycerate-independent phosphoglycerate mutase"/>
    <property type="match status" value="1"/>
</dbReference>
<dbReference type="Gene3D" id="3.40.720.10">
    <property type="entry name" value="Alkaline Phosphatase, subunit A"/>
    <property type="match status" value="1"/>
</dbReference>
<dbReference type="Gene3D" id="3.40.1450.10">
    <property type="entry name" value="BPG-independent phosphoglycerate mutase, domain B"/>
    <property type="match status" value="1"/>
</dbReference>
<dbReference type="HAMAP" id="MF_01038">
    <property type="entry name" value="GpmI"/>
    <property type="match status" value="1"/>
</dbReference>
<dbReference type="InterPro" id="IPR017850">
    <property type="entry name" value="Alkaline_phosphatase_core_sf"/>
</dbReference>
<dbReference type="InterPro" id="IPR011258">
    <property type="entry name" value="BPG-indep_PGM_N"/>
</dbReference>
<dbReference type="InterPro" id="IPR006124">
    <property type="entry name" value="Metalloenzyme"/>
</dbReference>
<dbReference type="InterPro" id="IPR036646">
    <property type="entry name" value="PGAM_B_sf"/>
</dbReference>
<dbReference type="InterPro" id="IPR005995">
    <property type="entry name" value="Pgm_bpd_ind"/>
</dbReference>
<dbReference type="NCBIfam" id="TIGR01307">
    <property type="entry name" value="pgm_bpd_ind"/>
    <property type="match status" value="1"/>
</dbReference>
<dbReference type="PANTHER" id="PTHR31637">
    <property type="entry name" value="2,3-BISPHOSPHOGLYCERATE-INDEPENDENT PHOSPHOGLYCERATE MUTASE"/>
    <property type="match status" value="1"/>
</dbReference>
<dbReference type="PANTHER" id="PTHR31637:SF0">
    <property type="entry name" value="2,3-BISPHOSPHOGLYCERATE-INDEPENDENT PHOSPHOGLYCERATE MUTASE"/>
    <property type="match status" value="1"/>
</dbReference>
<dbReference type="Pfam" id="PF06415">
    <property type="entry name" value="iPGM_N"/>
    <property type="match status" value="1"/>
</dbReference>
<dbReference type="Pfam" id="PF01676">
    <property type="entry name" value="Metalloenzyme"/>
    <property type="match status" value="1"/>
</dbReference>
<dbReference type="PIRSF" id="PIRSF001492">
    <property type="entry name" value="IPGAM"/>
    <property type="match status" value="1"/>
</dbReference>
<dbReference type="SUPFAM" id="SSF64158">
    <property type="entry name" value="2,3-Bisphosphoglycerate-independent phosphoglycerate mutase, substrate-binding domain"/>
    <property type="match status" value="1"/>
</dbReference>
<dbReference type="SUPFAM" id="SSF53649">
    <property type="entry name" value="Alkaline phosphatase-like"/>
    <property type="match status" value="1"/>
</dbReference>
<protein>
    <recommendedName>
        <fullName evidence="1">2,3-bisphosphoglycerate-independent phosphoglycerate mutase</fullName>
        <shortName evidence="1">BPG-independent PGAM</shortName>
        <shortName evidence="1">Phosphoglyceromutase</shortName>
        <shortName evidence="1">iPGM</shortName>
        <ecNumber evidence="1">5.4.2.12</ecNumber>
    </recommendedName>
</protein>
<keyword id="KW-0002">3D-structure</keyword>
<keyword id="KW-0324">Glycolysis</keyword>
<keyword id="KW-0413">Isomerase</keyword>
<keyword id="KW-0464">Manganese</keyword>
<keyword id="KW-0479">Metal-binding</keyword>
<organism>
    <name type="scientific">Staphylococcus aureus (strain COL)</name>
    <dbReference type="NCBI Taxonomy" id="93062"/>
    <lineage>
        <taxon>Bacteria</taxon>
        <taxon>Bacillati</taxon>
        <taxon>Bacillota</taxon>
        <taxon>Bacilli</taxon>
        <taxon>Bacillales</taxon>
        <taxon>Staphylococcaceae</taxon>
        <taxon>Staphylococcus</taxon>
    </lineage>
</organism>
<accession>Q5HHP2</accession>
<gene>
    <name evidence="1" type="primary">gpmI</name>
    <name type="ordered locus">SACOL0841</name>
</gene>
<comment type="function">
    <text evidence="1">Catalyzes the interconversion of 2-phosphoglycerate and 3-phosphoglycerate.</text>
</comment>
<comment type="catalytic activity">
    <reaction evidence="1">
        <text>(2R)-2-phosphoglycerate = (2R)-3-phosphoglycerate</text>
        <dbReference type="Rhea" id="RHEA:15901"/>
        <dbReference type="ChEBI" id="CHEBI:58272"/>
        <dbReference type="ChEBI" id="CHEBI:58289"/>
        <dbReference type="EC" id="5.4.2.12"/>
    </reaction>
</comment>
<comment type="cofactor">
    <cofactor evidence="1">
        <name>Mn(2+)</name>
        <dbReference type="ChEBI" id="CHEBI:29035"/>
    </cofactor>
    <text evidence="1">Binds 2 manganese ions per subunit.</text>
</comment>
<comment type="pathway">
    <text evidence="1">Carbohydrate degradation; glycolysis; pyruvate from D-glyceraldehyde 3-phosphate: step 3/5.</text>
</comment>
<comment type="subunit">
    <text evidence="1">Monomer.</text>
</comment>
<comment type="similarity">
    <text evidence="1">Belongs to the BPG-independent phosphoglycerate mutase family.</text>
</comment>
<reference key="1">
    <citation type="journal article" date="2005" name="J. Bacteriol.">
        <title>Insights on evolution of virulence and resistance from the complete genome analysis of an early methicillin-resistant Staphylococcus aureus strain and a biofilm-producing methicillin-resistant Staphylococcus epidermidis strain.</title>
        <authorList>
            <person name="Gill S.R."/>
            <person name="Fouts D.E."/>
            <person name="Archer G.L."/>
            <person name="Mongodin E.F."/>
            <person name="DeBoy R.T."/>
            <person name="Ravel J."/>
            <person name="Paulsen I.T."/>
            <person name="Kolonay J.F."/>
            <person name="Brinkac L.M."/>
            <person name="Beanan M.J."/>
            <person name="Dodson R.J."/>
            <person name="Daugherty S.C."/>
            <person name="Madupu R."/>
            <person name="Angiuoli S.V."/>
            <person name="Durkin A.S."/>
            <person name="Haft D.H."/>
            <person name="Vamathevan J.J."/>
            <person name="Khouri H."/>
            <person name="Utterback T.R."/>
            <person name="Lee C."/>
            <person name="Dimitrov G."/>
            <person name="Jiang L."/>
            <person name="Qin H."/>
            <person name="Weidman J."/>
            <person name="Tran K."/>
            <person name="Kang K.H."/>
            <person name="Hance I.R."/>
            <person name="Nelson K.E."/>
            <person name="Fraser C.M."/>
        </authorList>
    </citation>
    <scope>NUCLEOTIDE SEQUENCE [LARGE SCALE GENOMIC DNA]</scope>
    <source>
        <strain>COL</strain>
    </source>
</reference>
<name>GPMI_STAAC</name>
<sequence length="505" mass="56424">MAKKPTALIILDGFANRESEHGNAVKLANKPNFDRYYNKYPTTQIEASGLDVGLPEGQMGNSEVGHMNIGAGRIVYQSLTRINKSIEDGDFFENDVLNNAIAHVNSHDSALHIFGLLSDGGVHSHYKHLFALLELAKKQGVEKVYVHAFLDGRDVDQKSALKYIEETEAKFNELGIGQFASVSGRYYAMDRDKRWEREEKAYNAIRNFDAPTYATAKEGVEASYNEGLTDEFVVPFIVENQNDGVNDGDAVIFYNFRPDRAAQLSEIFANRAFEGFKVEQVKDLFYATFTKYNDNIDAAIVFEKVDLNNTIGEIAQNNNLTQLRIAETEKYPHVTYFMSGGRNEEFKGERRRLIDSPKVATYDLKPEMSAYEVKDALLEELNKGDLDLIILNFANPDMVGHSGMLEPTIKAIEAVDECLGEVVDKILDMDGYAIITADHGNSDQVLTDDDQPMTTHTTNPVPVIVTKEGVTLRETGRLGDLAPTLLDLLNVEQPEDMTGESLIKH</sequence>